<feature type="chain" id="PRO_0000328369" description="Hybrid signal transduction histidine kinase L">
    <location>
        <begin position="1"/>
        <end position="1709"/>
    </location>
</feature>
<feature type="domain" description="PAS" evidence="3">
    <location>
        <begin position="700"/>
        <end position="771"/>
    </location>
</feature>
<feature type="domain" description="PAC">
    <location>
        <begin position="770"/>
        <end position="822"/>
    </location>
</feature>
<feature type="domain" description="Histidine kinase" evidence="2">
    <location>
        <begin position="837"/>
        <end position="1059"/>
    </location>
</feature>
<feature type="domain" description="Response regulatory 1" evidence="4">
    <location>
        <begin position="1312"/>
        <end position="1492"/>
    </location>
</feature>
<feature type="domain" description="Response regulatory 2" evidence="4">
    <location>
        <begin position="1570"/>
        <end position="1692"/>
    </location>
</feature>
<feature type="region of interest" description="Disordered" evidence="5">
    <location>
        <begin position="52"/>
        <end position="192"/>
    </location>
</feature>
<feature type="region of interest" description="Disordered" evidence="5">
    <location>
        <begin position="206"/>
        <end position="276"/>
    </location>
</feature>
<feature type="region of interest" description="Disordered" evidence="5">
    <location>
        <begin position="413"/>
        <end position="535"/>
    </location>
</feature>
<feature type="region of interest" description="Disordered" evidence="5">
    <location>
        <begin position="554"/>
        <end position="615"/>
    </location>
</feature>
<feature type="region of interest" description="Disordered" evidence="5">
    <location>
        <begin position="1068"/>
        <end position="1112"/>
    </location>
</feature>
<feature type="region of interest" description="Disordered" evidence="5">
    <location>
        <begin position="1137"/>
        <end position="1298"/>
    </location>
</feature>
<feature type="region of interest" description="Disordered" evidence="5">
    <location>
        <begin position="1390"/>
        <end position="1440"/>
    </location>
</feature>
<feature type="compositionally biased region" description="Low complexity" evidence="5">
    <location>
        <begin position="53"/>
        <end position="87"/>
    </location>
</feature>
<feature type="compositionally biased region" description="Basic and acidic residues" evidence="5">
    <location>
        <begin position="88"/>
        <end position="100"/>
    </location>
</feature>
<feature type="compositionally biased region" description="Low complexity" evidence="5">
    <location>
        <begin position="106"/>
        <end position="148"/>
    </location>
</feature>
<feature type="compositionally biased region" description="Polar residues" evidence="5">
    <location>
        <begin position="149"/>
        <end position="170"/>
    </location>
</feature>
<feature type="compositionally biased region" description="Low complexity" evidence="5">
    <location>
        <begin position="413"/>
        <end position="466"/>
    </location>
</feature>
<feature type="compositionally biased region" description="Low complexity" evidence="5">
    <location>
        <begin position="486"/>
        <end position="535"/>
    </location>
</feature>
<feature type="compositionally biased region" description="Low complexity" evidence="5">
    <location>
        <begin position="554"/>
        <end position="576"/>
    </location>
</feature>
<feature type="compositionally biased region" description="Polar residues" evidence="5">
    <location>
        <begin position="585"/>
        <end position="610"/>
    </location>
</feature>
<feature type="compositionally biased region" description="Low complexity" evidence="5">
    <location>
        <begin position="1075"/>
        <end position="1112"/>
    </location>
</feature>
<feature type="compositionally biased region" description="Low complexity" evidence="5">
    <location>
        <begin position="1137"/>
        <end position="1153"/>
    </location>
</feature>
<feature type="compositionally biased region" description="Low complexity" evidence="5">
    <location>
        <begin position="1176"/>
        <end position="1194"/>
    </location>
</feature>
<feature type="compositionally biased region" description="Basic residues" evidence="5">
    <location>
        <begin position="1204"/>
        <end position="1221"/>
    </location>
</feature>
<feature type="compositionally biased region" description="Polar residues" evidence="5">
    <location>
        <begin position="1244"/>
        <end position="1257"/>
    </location>
</feature>
<feature type="compositionally biased region" description="Polar residues" evidence="5">
    <location>
        <begin position="1275"/>
        <end position="1298"/>
    </location>
</feature>
<feature type="compositionally biased region" description="Low complexity" evidence="5">
    <location>
        <begin position="1390"/>
        <end position="1412"/>
    </location>
</feature>
<feature type="compositionally biased region" description="Low complexity" evidence="5">
    <location>
        <begin position="1420"/>
        <end position="1440"/>
    </location>
</feature>
<feature type="modified residue" description="Phosphohistidine; by autocatalysis" evidence="2">
    <location>
        <position position="840"/>
    </location>
</feature>
<feature type="modified residue" description="4-aspartylphosphate" evidence="4">
    <location>
        <position position="1366"/>
    </location>
</feature>
<feature type="modified residue" description="4-aspartylphosphate" evidence="4">
    <location>
        <position position="1622"/>
    </location>
</feature>
<feature type="sequence conflict" description="In Ref. 1; AAK54092." evidence="6" ref="1">
    <original>E</original>
    <variation>Q</variation>
    <location>
        <position position="2"/>
    </location>
</feature>
<feature type="sequence conflict" description="In Ref. 1; AAK54092." evidence="6" ref="1">
    <original>RD</original>
    <variation>TH</variation>
    <location>
        <begin position="6"/>
        <end position="7"/>
    </location>
</feature>
<feature type="sequence conflict" description="In Ref. 1; AAK54092." evidence="6" ref="1">
    <original>N</original>
    <variation>Y</variation>
    <location>
        <position position="538"/>
    </location>
</feature>
<feature type="sequence conflict" description="In Ref. 1; AAK54092." evidence="6" ref="1">
    <original>L</original>
    <variation>W</variation>
    <location>
        <position position="644"/>
    </location>
</feature>
<feature type="sequence conflict" description="In Ref. 1; AAK54092." evidence="6" ref="1">
    <original>C</original>
    <variation>G</variation>
    <location>
        <position position="681"/>
    </location>
</feature>
<feature type="sequence conflict" description="In Ref. 1; AAK54092." evidence="6" ref="1">
    <original>L</original>
    <variation>V</variation>
    <location>
        <position position="684"/>
    </location>
</feature>
<feature type="sequence conflict" description="In Ref. 1; AAK54092." evidence="6" ref="1">
    <original>N</original>
    <variation>T</variation>
    <location>
        <position position="687"/>
    </location>
</feature>
<feature type="sequence conflict" description="In Ref. 1; AAK54092." evidence="6" ref="1">
    <original>A</original>
    <variation>G</variation>
    <location>
        <position position="694"/>
    </location>
</feature>
<feature type="sequence conflict" description="In Ref. 1; AAK54092." evidence="6" ref="1">
    <original>TR</original>
    <variation>PG</variation>
    <location>
        <begin position="701"/>
        <end position="702"/>
    </location>
</feature>
<comment type="function">
    <text evidence="1">Acts as a receptor histidine kinase for a signal transduction pathway. This protein undergoes an ATP-dependent autophosphorylation at a conserved histidine residue in the kinase core, and a phosphoryl group is then transferred to a conserved aspartate residue in the receiver domain (By similarity).</text>
</comment>
<comment type="catalytic activity">
    <reaction>
        <text>ATP + protein L-histidine = ADP + protein N-phospho-L-histidine.</text>
        <dbReference type="EC" id="2.7.13.3"/>
    </reaction>
</comment>
<comment type="domain">
    <text>Atypical domain architecture: contains 2 receiver domains.</text>
</comment>
<comment type="PTM">
    <text evidence="1">Activation probably requires transfer of a phosphate group between a histidine in the kinase core (transmitter) domain and an aspartate of the receiver domain.</text>
</comment>
<accession>Q54RP6</accession>
<accession>Q95PH5</accession>
<accession>Q9GTU0</accession>
<proteinExistence type="inferred from homology"/>
<dbReference type="EC" id="2.7.13.3"/>
<dbReference type="EMBL" id="AF362373">
    <property type="protein sequence ID" value="AAK54092.2"/>
    <property type="molecule type" value="Genomic_DNA"/>
</dbReference>
<dbReference type="EMBL" id="AAFI02000049">
    <property type="protein sequence ID" value="EAL65907.1"/>
    <property type="molecule type" value="Genomic_DNA"/>
</dbReference>
<dbReference type="EMBL" id="AF258796">
    <property type="protein sequence ID" value="AAG00916.1"/>
    <property type="molecule type" value="Genomic_DNA"/>
</dbReference>
<dbReference type="RefSeq" id="XP_639305.1">
    <property type="nucleotide sequence ID" value="XM_634213.1"/>
</dbReference>
<dbReference type="SMR" id="Q54RP6"/>
<dbReference type="STRING" id="44689.Q54RP6"/>
<dbReference type="PaxDb" id="44689-DDB0191389"/>
<dbReference type="EnsemblProtists" id="EAL65907">
    <property type="protein sequence ID" value="EAL65907"/>
    <property type="gene ID" value="DDB_G0282927"/>
</dbReference>
<dbReference type="GeneID" id="8623876"/>
<dbReference type="KEGG" id="ddi:DDB_G0282927"/>
<dbReference type="dictyBase" id="DDB_G0282927">
    <property type="gene designation" value="dhkL"/>
</dbReference>
<dbReference type="VEuPathDB" id="AmoebaDB:DDB_G0282927"/>
<dbReference type="eggNOG" id="KOG0519">
    <property type="taxonomic scope" value="Eukaryota"/>
</dbReference>
<dbReference type="HOGENOM" id="CLU_240641_0_0_1"/>
<dbReference type="InParanoid" id="Q54RP6"/>
<dbReference type="OMA" id="MMSHDIR"/>
<dbReference type="PRO" id="PR:Q54RP6"/>
<dbReference type="Proteomes" id="UP000002195">
    <property type="component" value="Chromosome 4"/>
</dbReference>
<dbReference type="GO" id="GO:0005524">
    <property type="term" value="F:ATP binding"/>
    <property type="evidence" value="ECO:0007669"/>
    <property type="project" value="UniProtKB-KW"/>
</dbReference>
<dbReference type="GO" id="GO:0000155">
    <property type="term" value="F:phosphorelay sensor kinase activity"/>
    <property type="evidence" value="ECO:0007669"/>
    <property type="project" value="InterPro"/>
</dbReference>
<dbReference type="GO" id="GO:0010738">
    <property type="term" value="P:regulation of protein kinase A signaling"/>
    <property type="evidence" value="ECO:0000270"/>
    <property type="project" value="dictyBase"/>
</dbReference>
<dbReference type="GO" id="GO:0031156">
    <property type="term" value="P:regulation of sorocarp development"/>
    <property type="evidence" value="ECO:0000315"/>
    <property type="project" value="dictyBase"/>
</dbReference>
<dbReference type="CDD" id="cd16922">
    <property type="entry name" value="HATPase_EvgS-ArcB-TorS-like"/>
    <property type="match status" value="1"/>
</dbReference>
<dbReference type="CDD" id="cd00082">
    <property type="entry name" value="HisKA"/>
    <property type="match status" value="1"/>
</dbReference>
<dbReference type="CDD" id="cd00130">
    <property type="entry name" value="PAS"/>
    <property type="match status" value="1"/>
</dbReference>
<dbReference type="CDD" id="cd17546">
    <property type="entry name" value="REC_hyHK_CKI1_RcsC-like"/>
    <property type="match status" value="1"/>
</dbReference>
<dbReference type="FunFam" id="3.40.50.2300:FF:000800">
    <property type="match status" value="1"/>
</dbReference>
<dbReference type="FunFam" id="3.30.565.10:FF:000010">
    <property type="entry name" value="Sensor histidine kinase RcsC"/>
    <property type="match status" value="1"/>
</dbReference>
<dbReference type="Gene3D" id="1.10.287.130">
    <property type="match status" value="1"/>
</dbReference>
<dbReference type="Gene3D" id="3.40.50.2300">
    <property type="match status" value="2"/>
</dbReference>
<dbReference type="Gene3D" id="3.30.565.10">
    <property type="entry name" value="Histidine kinase-like ATPase, C-terminal domain"/>
    <property type="match status" value="1"/>
</dbReference>
<dbReference type="Gene3D" id="3.30.450.20">
    <property type="entry name" value="PAS domain"/>
    <property type="match status" value="1"/>
</dbReference>
<dbReference type="InterPro" id="IPR050956">
    <property type="entry name" value="2C_system_His_kinase"/>
</dbReference>
<dbReference type="InterPro" id="IPR011006">
    <property type="entry name" value="CheY-like_superfamily"/>
</dbReference>
<dbReference type="InterPro" id="IPR036890">
    <property type="entry name" value="HATPase_C_sf"/>
</dbReference>
<dbReference type="InterPro" id="IPR005467">
    <property type="entry name" value="His_kinase_dom"/>
</dbReference>
<dbReference type="InterPro" id="IPR003661">
    <property type="entry name" value="HisK_dim/P_dom"/>
</dbReference>
<dbReference type="InterPro" id="IPR036097">
    <property type="entry name" value="HisK_dim/P_sf"/>
</dbReference>
<dbReference type="InterPro" id="IPR000014">
    <property type="entry name" value="PAS"/>
</dbReference>
<dbReference type="InterPro" id="IPR035965">
    <property type="entry name" value="PAS-like_dom_sf"/>
</dbReference>
<dbReference type="InterPro" id="IPR004358">
    <property type="entry name" value="Sig_transdc_His_kin-like_C"/>
</dbReference>
<dbReference type="InterPro" id="IPR001789">
    <property type="entry name" value="Sig_transdc_resp-reg_receiver"/>
</dbReference>
<dbReference type="NCBIfam" id="TIGR00229">
    <property type="entry name" value="sensory_box"/>
    <property type="match status" value="1"/>
</dbReference>
<dbReference type="PANTHER" id="PTHR43719:SF24">
    <property type="entry name" value="HYBRID SIGNAL TRANSDUCTION HISTIDINE KINASE L"/>
    <property type="match status" value="1"/>
</dbReference>
<dbReference type="PANTHER" id="PTHR43719">
    <property type="entry name" value="TWO-COMPONENT HISTIDINE KINASE"/>
    <property type="match status" value="1"/>
</dbReference>
<dbReference type="Pfam" id="PF02518">
    <property type="entry name" value="HATPase_c"/>
    <property type="match status" value="1"/>
</dbReference>
<dbReference type="Pfam" id="PF00512">
    <property type="entry name" value="HisKA"/>
    <property type="match status" value="1"/>
</dbReference>
<dbReference type="Pfam" id="PF13426">
    <property type="entry name" value="PAS_9"/>
    <property type="match status" value="1"/>
</dbReference>
<dbReference type="Pfam" id="PF00072">
    <property type="entry name" value="Response_reg"/>
    <property type="match status" value="1"/>
</dbReference>
<dbReference type="PRINTS" id="PR00344">
    <property type="entry name" value="BCTRLSENSOR"/>
</dbReference>
<dbReference type="SMART" id="SM00387">
    <property type="entry name" value="HATPase_c"/>
    <property type="match status" value="1"/>
</dbReference>
<dbReference type="SMART" id="SM00388">
    <property type="entry name" value="HisKA"/>
    <property type="match status" value="1"/>
</dbReference>
<dbReference type="SMART" id="SM00091">
    <property type="entry name" value="PAS"/>
    <property type="match status" value="1"/>
</dbReference>
<dbReference type="SMART" id="SM00448">
    <property type="entry name" value="REC"/>
    <property type="match status" value="2"/>
</dbReference>
<dbReference type="SUPFAM" id="SSF55874">
    <property type="entry name" value="ATPase domain of HSP90 chaperone/DNA topoisomerase II/histidine kinase"/>
    <property type="match status" value="1"/>
</dbReference>
<dbReference type="SUPFAM" id="SSF52172">
    <property type="entry name" value="CheY-like"/>
    <property type="match status" value="3"/>
</dbReference>
<dbReference type="SUPFAM" id="SSF47384">
    <property type="entry name" value="Homodimeric domain of signal transducing histidine kinase"/>
    <property type="match status" value="1"/>
</dbReference>
<dbReference type="SUPFAM" id="SSF55785">
    <property type="entry name" value="PYP-like sensor domain (PAS domain)"/>
    <property type="match status" value="1"/>
</dbReference>
<dbReference type="PROSITE" id="PS50109">
    <property type="entry name" value="HIS_KIN"/>
    <property type="match status" value="1"/>
</dbReference>
<dbReference type="PROSITE" id="PS50112">
    <property type="entry name" value="PAS"/>
    <property type="match status" value="1"/>
</dbReference>
<dbReference type="PROSITE" id="PS50110">
    <property type="entry name" value="RESPONSE_REGULATORY"/>
    <property type="match status" value="2"/>
</dbReference>
<gene>
    <name type="primary">dhkL</name>
    <name type="ORF">DDB_G0282927</name>
</gene>
<organism>
    <name type="scientific">Dictyostelium discoideum</name>
    <name type="common">Social amoeba</name>
    <dbReference type="NCBI Taxonomy" id="44689"/>
    <lineage>
        <taxon>Eukaryota</taxon>
        <taxon>Amoebozoa</taxon>
        <taxon>Evosea</taxon>
        <taxon>Eumycetozoa</taxon>
        <taxon>Dictyostelia</taxon>
        <taxon>Dictyosteliales</taxon>
        <taxon>Dictyosteliaceae</taxon>
        <taxon>Dictyostelium</taxon>
    </lineage>
</organism>
<sequence>MEGSKRDIIENSNNGNNKGVVIEELGETYYTNSKPSTSADCKYFRDSFEFGSNNNNNNNNNNNNNNNNNNNNNNNNNNNNNNNNNNNNEEKSNNETEKTLESNGDTTTTTTTNNNNNNNNNNNNNNNNNNNNNNNNNNNNNNNNNNTNSSNDIYMNSPSSTLSSPGNAGNNLPIGCTKPNVPKSPYSPSPPHLYKSNSTSYLKSSFFSGNGSSSSSSSTTTTNINSNNSNTNTYSTSTNVKKNNSNTNSNTNNNTNGNTNTNSNSNKKNINSNSSDNIIINDTADIMNRRRDRFKSFSWTIGESNSNSKFSELSMISSKCKSIKSEFTPLFETLTVFDESDKIRHSLIQNHYKTLLIQNPASPNRTLLTNLLQRRGHNLTTCPIDINHVLQLLQKESFSLFIFDPNESIINNTSNSISSNEPISLSSSSSYYNNNNSNNNSVNNNNNNNSGNSTNNNSPSSHTPNSPMIFQPIVSNICSNSGGSGNNSPHHIDNNNNSNQQQQQQQQQQQQQQQHQHQQQQQQSSSTTATTNNSCTLNQQQQQQQQQQQQQQQQQQQQQQSQPTTPTQSTQSPTTSISFSKKKNLTINTSFKTSPMSSPKSFNKPSQSPQNIFNNFSNTYNPNNIEFCKILKSKLTEFETVIVLTESTDPSEFCQYIDAGATDYIPQPISPILLDLRLTTCQKLVNNNLHLKKAESLKDATRKMVTCIENSPDCVEIWDPSGHIQYLNLAFSEMTGFARWELLGKEFSNLIDNTEIIPNMWATLTDKKTWNGFIRTRHNNNTLIYFEASISPVLDQFQQILYYNCTKRDVTQKRIDEESKTLEQNKIIEKSRLRLSMMSHDIRTPMSNIIGMADLLLDTSLSQHQHHYLEIIKNSSNTLLTIINDILDISKIEAGKLDIDYESFDFNATVSQVVESMAQRVQSKGLELLSYVDPKIPNILIGPSSRLNQILTNLLGNSLKFTDKGEISICCLLNDETDSEYEIKVDVRDTGIGIKKEALPLLFKAFTQAEGTITRQYGGSGLGLAICKELVHLAFNGEISVESQYGHGSTFTCILKFKKFLPSDSQNLLPASSPLQQQQQQQQHQQQTQFHQHQQQTQFHQHQQQQLQHQQHQQHQQLQQQQQQQQQLQQQLQQHQQHQLQQRQHHQQQLQQQQHHHHQQVHLQQQQQHEHDAQHNQHIQQQQQQQQQQQQQQQQHEHNNNGHHNSHGHNHHGSHHNHNHQHNNNNNNITINKLQHQEKKQKSNEQQLESITENSFSPIVEPMVISDPDTPEALNISQSPSPQSIHNGTTINQQPTSPLNTLGSKFDFSGAKMLFIERNDTSRGNLFKQLLAWNIQLELVEDGESGFRKWKQSIESNSPYSIIIMDLNTPGVDGASLPMRIKKELELMQQHLQQQQEQEQQQQQEQQQSELQKQPDVENKNSSQNNDNNNNNNKSNSSGGNQCIYRSPIIMLMPIQFLNSQLEDNLKDAGVCAILSKPIRMSQLADVFMMYLGPNSEHNNNNNYNNNNGNGYLNGGGGGGGSVNGTGNGTLQVGMSNDGGNGCGVVSFWNKQRRASAEEQEQDPSKLLGKVLVVDDNHINIQILSKMLQTVGCEVDSVLSGADALAKINQSSGDSYDAIFLDIQMPDMDGFQVSRKIREREKKFSLPRVAIIATTANVFKEDQLKCFDAGMDDFISKPIKRAEIKEIIKKYGKNGNHQSGSAYSLYKLS</sequence>
<name>DHKL_DICDI</name>
<protein>
    <recommendedName>
        <fullName>Hybrid signal transduction histidine kinase L</fullName>
        <ecNumber>2.7.13.3</ecNumber>
    </recommendedName>
</protein>
<reference key="1">
    <citation type="book" date="2001" name="Histidine kinases in signal transduction">
        <title>The histidine kinases of Dictyostelium.</title>
        <editorList>
            <person name="Inouye M."/>
            <person name="Dutta R."/>
        </editorList>
        <authorList>
            <person name="Anjard C."/>
            <person name="Loomis W.F."/>
        </authorList>
    </citation>
    <scope>NUCLEOTIDE SEQUENCE [GENOMIC DNA]</scope>
    <source>
        <strain>AX4</strain>
    </source>
</reference>
<reference key="2">
    <citation type="journal article" date="2005" name="Nature">
        <title>The genome of the social amoeba Dictyostelium discoideum.</title>
        <authorList>
            <person name="Eichinger L."/>
            <person name="Pachebat J.A."/>
            <person name="Gloeckner G."/>
            <person name="Rajandream M.A."/>
            <person name="Sucgang R."/>
            <person name="Berriman M."/>
            <person name="Song J."/>
            <person name="Olsen R."/>
            <person name="Szafranski K."/>
            <person name="Xu Q."/>
            <person name="Tunggal B."/>
            <person name="Kummerfeld S."/>
            <person name="Madera M."/>
            <person name="Konfortov B.A."/>
            <person name="Rivero F."/>
            <person name="Bankier A.T."/>
            <person name="Lehmann R."/>
            <person name="Hamlin N."/>
            <person name="Davies R."/>
            <person name="Gaudet P."/>
            <person name="Fey P."/>
            <person name="Pilcher K."/>
            <person name="Chen G."/>
            <person name="Saunders D."/>
            <person name="Sodergren E.J."/>
            <person name="Davis P."/>
            <person name="Kerhornou A."/>
            <person name="Nie X."/>
            <person name="Hall N."/>
            <person name="Anjard C."/>
            <person name="Hemphill L."/>
            <person name="Bason N."/>
            <person name="Farbrother P."/>
            <person name="Desany B."/>
            <person name="Just E."/>
            <person name="Morio T."/>
            <person name="Rost R."/>
            <person name="Churcher C.M."/>
            <person name="Cooper J."/>
            <person name="Haydock S."/>
            <person name="van Driessche N."/>
            <person name="Cronin A."/>
            <person name="Goodhead I."/>
            <person name="Muzny D.M."/>
            <person name="Mourier T."/>
            <person name="Pain A."/>
            <person name="Lu M."/>
            <person name="Harper D."/>
            <person name="Lindsay R."/>
            <person name="Hauser H."/>
            <person name="James K.D."/>
            <person name="Quiles M."/>
            <person name="Madan Babu M."/>
            <person name="Saito T."/>
            <person name="Buchrieser C."/>
            <person name="Wardroper A."/>
            <person name="Felder M."/>
            <person name="Thangavelu M."/>
            <person name="Johnson D."/>
            <person name="Knights A."/>
            <person name="Loulseged H."/>
            <person name="Mungall K.L."/>
            <person name="Oliver K."/>
            <person name="Price C."/>
            <person name="Quail M.A."/>
            <person name="Urushihara H."/>
            <person name="Hernandez J."/>
            <person name="Rabbinowitsch E."/>
            <person name="Steffen D."/>
            <person name="Sanders M."/>
            <person name="Ma J."/>
            <person name="Kohara Y."/>
            <person name="Sharp S."/>
            <person name="Simmonds M.N."/>
            <person name="Spiegler S."/>
            <person name="Tivey A."/>
            <person name="Sugano S."/>
            <person name="White B."/>
            <person name="Walker D."/>
            <person name="Woodward J.R."/>
            <person name="Winckler T."/>
            <person name="Tanaka Y."/>
            <person name="Shaulsky G."/>
            <person name="Schleicher M."/>
            <person name="Weinstock G.M."/>
            <person name="Rosenthal A."/>
            <person name="Cox E.C."/>
            <person name="Chisholm R.L."/>
            <person name="Gibbs R.A."/>
            <person name="Loomis W.F."/>
            <person name="Platzer M."/>
            <person name="Kay R.R."/>
            <person name="Williams J.G."/>
            <person name="Dear P.H."/>
            <person name="Noegel A.A."/>
            <person name="Barrell B.G."/>
            <person name="Kuspa A."/>
        </authorList>
    </citation>
    <scope>NUCLEOTIDE SEQUENCE [LARGE SCALE GENOMIC DNA]</scope>
    <source>
        <strain>AX4</strain>
    </source>
</reference>
<reference key="3">
    <citation type="journal article" date="2000" name="EMBO J.">
        <title>Osmotic stress response in Dictyostelium is mediated by cAMP.</title>
        <authorList>
            <person name="Ott A."/>
            <person name="Oehme F."/>
            <person name="Keller H."/>
            <person name="Schuster S.C."/>
        </authorList>
    </citation>
    <scope>NUCLEOTIDE SEQUENCE [GENOMIC DNA] OF 1562-1709</scope>
    <source>
        <strain>AX2</strain>
    </source>
</reference>
<keyword id="KW-0067">ATP-binding</keyword>
<keyword id="KW-0418">Kinase</keyword>
<keyword id="KW-0547">Nucleotide-binding</keyword>
<keyword id="KW-0597">Phosphoprotein</keyword>
<keyword id="KW-1185">Reference proteome</keyword>
<keyword id="KW-0677">Repeat</keyword>
<keyword id="KW-0807">Transducer</keyword>
<keyword id="KW-0808">Transferase</keyword>
<keyword id="KW-0902">Two-component regulatory system</keyword>
<evidence type="ECO:0000250" key="1"/>
<evidence type="ECO:0000255" key="2">
    <source>
        <dbReference type="PROSITE-ProRule" id="PRU00107"/>
    </source>
</evidence>
<evidence type="ECO:0000255" key="3">
    <source>
        <dbReference type="PROSITE-ProRule" id="PRU00140"/>
    </source>
</evidence>
<evidence type="ECO:0000255" key="4">
    <source>
        <dbReference type="PROSITE-ProRule" id="PRU00169"/>
    </source>
</evidence>
<evidence type="ECO:0000256" key="5">
    <source>
        <dbReference type="SAM" id="MobiDB-lite"/>
    </source>
</evidence>
<evidence type="ECO:0000305" key="6"/>